<dbReference type="EC" id="3.5.1.5" evidence="1"/>
<dbReference type="EMBL" id="CP001635">
    <property type="protein sequence ID" value="ACS20853.1"/>
    <property type="molecule type" value="Genomic_DNA"/>
</dbReference>
<dbReference type="SMR" id="C5CXZ7"/>
<dbReference type="STRING" id="543728.Vapar_4240"/>
<dbReference type="KEGG" id="vap:Vapar_4240"/>
<dbReference type="eggNOG" id="COG0831">
    <property type="taxonomic scope" value="Bacteria"/>
</dbReference>
<dbReference type="HOGENOM" id="CLU_145825_1_0_4"/>
<dbReference type="OrthoDB" id="9797217at2"/>
<dbReference type="UniPathway" id="UPA00258">
    <property type="reaction ID" value="UER00370"/>
</dbReference>
<dbReference type="GO" id="GO:0005737">
    <property type="term" value="C:cytoplasm"/>
    <property type="evidence" value="ECO:0007669"/>
    <property type="project" value="UniProtKB-SubCell"/>
</dbReference>
<dbReference type="GO" id="GO:0016151">
    <property type="term" value="F:nickel cation binding"/>
    <property type="evidence" value="ECO:0007669"/>
    <property type="project" value="InterPro"/>
</dbReference>
<dbReference type="GO" id="GO:0009039">
    <property type="term" value="F:urease activity"/>
    <property type="evidence" value="ECO:0007669"/>
    <property type="project" value="UniProtKB-UniRule"/>
</dbReference>
<dbReference type="GO" id="GO:0043419">
    <property type="term" value="P:urea catabolic process"/>
    <property type="evidence" value="ECO:0007669"/>
    <property type="project" value="UniProtKB-UniRule"/>
</dbReference>
<dbReference type="CDD" id="cd00390">
    <property type="entry name" value="Urease_gamma"/>
    <property type="match status" value="1"/>
</dbReference>
<dbReference type="Gene3D" id="3.30.280.10">
    <property type="entry name" value="Urease, gamma-like subunit"/>
    <property type="match status" value="1"/>
</dbReference>
<dbReference type="HAMAP" id="MF_00739">
    <property type="entry name" value="Urease_gamma"/>
    <property type="match status" value="1"/>
</dbReference>
<dbReference type="InterPro" id="IPR012010">
    <property type="entry name" value="Urease_gamma"/>
</dbReference>
<dbReference type="InterPro" id="IPR002026">
    <property type="entry name" value="Urease_gamma/gamma-beta_su"/>
</dbReference>
<dbReference type="InterPro" id="IPR036463">
    <property type="entry name" value="Urease_gamma_sf"/>
</dbReference>
<dbReference type="InterPro" id="IPR050069">
    <property type="entry name" value="Urease_subunit"/>
</dbReference>
<dbReference type="NCBIfam" id="NF009712">
    <property type="entry name" value="PRK13241.1"/>
    <property type="match status" value="1"/>
</dbReference>
<dbReference type="NCBIfam" id="TIGR00193">
    <property type="entry name" value="urease_gam"/>
    <property type="match status" value="1"/>
</dbReference>
<dbReference type="PANTHER" id="PTHR33569">
    <property type="entry name" value="UREASE"/>
    <property type="match status" value="1"/>
</dbReference>
<dbReference type="PANTHER" id="PTHR33569:SF1">
    <property type="entry name" value="UREASE"/>
    <property type="match status" value="1"/>
</dbReference>
<dbReference type="Pfam" id="PF00547">
    <property type="entry name" value="Urease_gamma"/>
    <property type="match status" value="1"/>
</dbReference>
<dbReference type="PIRSF" id="PIRSF001223">
    <property type="entry name" value="Urease_gamma"/>
    <property type="match status" value="1"/>
</dbReference>
<dbReference type="SUPFAM" id="SSF54111">
    <property type="entry name" value="Urease, gamma-subunit"/>
    <property type="match status" value="1"/>
</dbReference>
<reference key="1">
    <citation type="journal article" date="2011" name="J. Bacteriol.">
        <title>Complete genome sequence of the metabolically versatile plant growth-promoting endophyte, Variovorax paradoxus S110.</title>
        <authorList>
            <person name="Han J.I."/>
            <person name="Choi H.K."/>
            <person name="Lee S.W."/>
            <person name="Orwin P.M."/>
            <person name="Kim J."/>
            <person name="Laroe S.L."/>
            <person name="Kim T.G."/>
            <person name="O'Neil J."/>
            <person name="Leadbetter J.R."/>
            <person name="Lee S.Y."/>
            <person name="Hur C.G."/>
            <person name="Spain J.C."/>
            <person name="Ovchinnikova G."/>
            <person name="Goodwin L."/>
            <person name="Han C."/>
        </authorList>
    </citation>
    <scope>NUCLEOTIDE SEQUENCE [LARGE SCALE GENOMIC DNA]</scope>
    <source>
        <strain>S110</strain>
    </source>
</reference>
<keyword id="KW-0963">Cytoplasm</keyword>
<keyword id="KW-0378">Hydrolase</keyword>
<comment type="catalytic activity">
    <reaction evidence="1">
        <text>urea + 2 H2O + H(+) = hydrogencarbonate + 2 NH4(+)</text>
        <dbReference type="Rhea" id="RHEA:20557"/>
        <dbReference type="ChEBI" id="CHEBI:15377"/>
        <dbReference type="ChEBI" id="CHEBI:15378"/>
        <dbReference type="ChEBI" id="CHEBI:16199"/>
        <dbReference type="ChEBI" id="CHEBI:17544"/>
        <dbReference type="ChEBI" id="CHEBI:28938"/>
        <dbReference type="EC" id="3.5.1.5"/>
    </reaction>
</comment>
<comment type="pathway">
    <text evidence="1">Nitrogen metabolism; urea degradation; CO(2) and NH(3) from urea (urease route): step 1/1.</text>
</comment>
<comment type="subunit">
    <text evidence="1">Heterotrimer of UreA (gamma), UreB (beta) and UreC (alpha) subunits. Three heterotrimers associate to form the active enzyme.</text>
</comment>
<comment type="subcellular location">
    <subcellularLocation>
        <location evidence="1">Cytoplasm</location>
    </subcellularLocation>
</comment>
<comment type="similarity">
    <text evidence="1">Belongs to the urease gamma subunit family.</text>
</comment>
<accession>C5CXZ7</accession>
<evidence type="ECO:0000255" key="1">
    <source>
        <dbReference type="HAMAP-Rule" id="MF_00739"/>
    </source>
</evidence>
<feature type="chain" id="PRO_1000212806" description="Urease subunit gamma">
    <location>
        <begin position="1"/>
        <end position="100"/>
    </location>
</feature>
<organism>
    <name type="scientific">Variovorax paradoxus (strain S110)</name>
    <dbReference type="NCBI Taxonomy" id="543728"/>
    <lineage>
        <taxon>Bacteria</taxon>
        <taxon>Pseudomonadati</taxon>
        <taxon>Pseudomonadota</taxon>
        <taxon>Betaproteobacteria</taxon>
        <taxon>Burkholderiales</taxon>
        <taxon>Comamonadaceae</taxon>
        <taxon>Variovorax</taxon>
    </lineage>
</organism>
<protein>
    <recommendedName>
        <fullName evidence="1">Urease subunit gamma</fullName>
        <ecNumber evidence="1">3.5.1.5</ecNumber>
    </recommendedName>
    <alternativeName>
        <fullName evidence="1">Urea amidohydrolase subunit gamma</fullName>
    </alternativeName>
</protein>
<name>URE3_VARPS</name>
<gene>
    <name evidence="1" type="primary">ureA</name>
    <name type="ordered locus">Vapar_4240</name>
</gene>
<proteinExistence type="inferred from homology"/>
<sequence>MELTPREKDKLLIFTAALLAERRKARGLKLNYPEAVALISAAVMEGARDGKSVAALMSEGRTVLTRADVMDGIAEMIPDIQVEATFPDGTKLVTVHQPIV</sequence>